<feature type="chain" id="PRO_0000403509" description="Flap endonuclease 1">
    <location>
        <begin position="1"/>
        <end position="382"/>
    </location>
</feature>
<feature type="region of interest" description="N-domain">
    <location>
        <begin position="1"/>
        <end position="104"/>
    </location>
</feature>
<feature type="region of interest" description="Disordered" evidence="2">
    <location>
        <begin position="95"/>
        <end position="118"/>
    </location>
</feature>
<feature type="region of interest" description="I-domain">
    <location>
        <begin position="122"/>
        <end position="253"/>
    </location>
</feature>
<feature type="region of interest" description="Interaction with PCNA" evidence="1">
    <location>
        <begin position="336"/>
        <end position="344"/>
    </location>
</feature>
<feature type="region of interest" description="Disordered" evidence="2">
    <location>
        <begin position="353"/>
        <end position="382"/>
    </location>
</feature>
<feature type="compositionally biased region" description="Basic and acidic residues" evidence="2">
    <location>
        <begin position="96"/>
        <end position="115"/>
    </location>
</feature>
<feature type="compositionally biased region" description="Polar residues" evidence="2">
    <location>
        <begin position="364"/>
        <end position="375"/>
    </location>
</feature>
<feature type="binding site" evidence="1">
    <location>
        <position position="34"/>
    </location>
    <ligand>
        <name>Mg(2+)</name>
        <dbReference type="ChEBI" id="CHEBI:18420"/>
        <label>1</label>
    </ligand>
</feature>
<feature type="binding site" evidence="1">
    <location>
        <position position="47"/>
    </location>
    <ligand>
        <name>DNA</name>
        <dbReference type="ChEBI" id="CHEBI:16991"/>
    </ligand>
</feature>
<feature type="binding site" evidence="1">
    <location>
        <position position="70"/>
    </location>
    <ligand>
        <name>DNA</name>
        <dbReference type="ChEBI" id="CHEBI:16991"/>
    </ligand>
</feature>
<feature type="binding site" evidence="1">
    <location>
        <position position="86"/>
    </location>
    <ligand>
        <name>Mg(2+)</name>
        <dbReference type="ChEBI" id="CHEBI:18420"/>
        <label>1</label>
    </ligand>
</feature>
<feature type="binding site" evidence="1">
    <location>
        <position position="158"/>
    </location>
    <ligand>
        <name>DNA</name>
        <dbReference type="ChEBI" id="CHEBI:16991"/>
    </ligand>
</feature>
<feature type="binding site" evidence="1">
    <location>
        <position position="158"/>
    </location>
    <ligand>
        <name>Mg(2+)</name>
        <dbReference type="ChEBI" id="CHEBI:18420"/>
        <label>1</label>
    </ligand>
</feature>
<feature type="binding site" evidence="1">
    <location>
        <position position="160"/>
    </location>
    <ligand>
        <name>Mg(2+)</name>
        <dbReference type="ChEBI" id="CHEBI:18420"/>
        <label>1</label>
    </ligand>
</feature>
<feature type="binding site" evidence="1">
    <location>
        <position position="179"/>
    </location>
    <ligand>
        <name>Mg(2+)</name>
        <dbReference type="ChEBI" id="CHEBI:18420"/>
        <label>2</label>
    </ligand>
</feature>
<feature type="binding site" evidence="1">
    <location>
        <position position="181"/>
    </location>
    <ligand>
        <name>Mg(2+)</name>
        <dbReference type="ChEBI" id="CHEBI:18420"/>
        <label>2</label>
    </ligand>
</feature>
<feature type="binding site" evidence="1">
    <location>
        <position position="231"/>
    </location>
    <ligand>
        <name>DNA</name>
        <dbReference type="ChEBI" id="CHEBI:16991"/>
    </ligand>
</feature>
<feature type="binding site" evidence="1">
    <location>
        <position position="233"/>
    </location>
    <ligand>
        <name>DNA</name>
        <dbReference type="ChEBI" id="CHEBI:16991"/>
    </ligand>
</feature>
<feature type="binding site" evidence="1">
    <location>
        <position position="233"/>
    </location>
    <ligand>
        <name>Mg(2+)</name>
        <dbReference type="ChEBI" id="CHEBI:18420"/>
        <label>2</label>
    </ligand>
</feature>
<reference key="1">
    <citation type="journal article" date="2010" name="BMC Genomics">
        <title>An insight into the sialome of Glossina morsitans morsitans.</title>
        <authorList>
            <person name="Alves-Silva J."/>
            <person name="Ribeiro J.M."/>
            <person name="Van Den Abbeele J."/>
            <person name="Attardo G."/>
            <person name="Hao Z."/>
            <person name="Haines L.R."/>
            <person name="Soares M.B."/>
            <person name="Berriman M."/>
            <person name="Aksoy S."/>
            <person name="Lehane M.J."/>
        </authorList>
    </citation>
    <scope>NUCLEOTIDE SEQUENCE [LARGE SCALE MRNA]</scope>
    <source>
        <tissue>Salivary gland</tissue>
    </source>
</reference>
<accession>D3TQJ5</accession>
<sequence>MGILGLSKLIADICPQAIKESDIKNYFGRKVAIDASMCLYQFLIAVRAEGAQLTNVDGETTSHLMGMFYRTIRLLENGIKPVYVFDGKPPISKSGELAKRAERREDAQKALEKATEAGNEADMDKFNRRLVKVTKEHANEAKELLKLMGVPYVEAPCEAEAQCAALVKAGKVYATATEDMDALTFGSGILLRHLTFSEARKMPVKEFSYAKVLDGFGLTSQEFIDLCILLGCDYCDGIRGIGPKRATELMNSYKDIETILEKIDRKKYTVPEDWNYQIARELFVNPEVADPSSLELKWFDPDEDGLVRFFCGDRQFNEDRVRSGAKKILKCKSSQTQGRLDSFFKVIPAACGTTPKRKADDKNNVQQKKSKTAGNTKGKRPK</sequence>
<proteinExistence type="evidence at transcript level"/>
<protein>
    <recommendedName>
        <fullName evidence="1">Flap endonuclease 1</fullName>
        <shortName evidence="1">FEN-1</shortName>
        <ecNumber evidence="1">3.1.-.-</ecNumber>
    </recommendedName>
    <alternativeName>
        <fullName evidence="1">Flap structure-specific endonuclease 1</fullName>
    </alternativeName>
</protein>
<dbReference type="EC" id="3.1.-.-" evidence="1"/>
<dbReference type="EMBL" id="EZ423697">
    <property type="protein sequence ID" value="ADD19973.1"/>
    <property type="molecule type" value="mRNA"/>
</dbReference>
<dbReference type="SMR" id="D3TQJ5"/>
<dbReference type="STRING" id="37546.D3TQJ5"/>
<dbReference type="Proteomes" id="UP000092444">
    <property type="component" value="Unassembled WGS sequence"/>
</dbReference>
<dbReference type="GO" id="GO:0005739">
    <property type="term" value="C:mitochondrion"/>
    <property type="evidence" value="ECO:0007669"/>
    <property type="project" value="UniProtKB-SubCell"/>
</dbReference>
<dbReference type="GO" id="GO:0005730">
    <property type="term" value="C:nucleolus"/>
    <property type="evidence" value="ECO:0007669"/>
    <property type="project" value="UniProtKB-SubCell"/>
</dbReference>
<dbReference type="GO" id="GO:0005654">
    <property type="term" value="C:nucleoplasm"/>
    <property type="evidence" value="ECO:0007669"/>
    <property type="project" value="UniProtKB-SubCell"/>
</dbReference>
<dbReference type="GO" id="GO:0008409">
    <property type="term" value="F:5'-3' exonuclease activity"/>
    <property type="evidence" value="ECO:0007669"/>
    <property type="project" value="UniProtKB-UniRule"/>
</dbReference>
<dbReference type="GO" id="GO:0017108">
    <property type="term" value="F:5'-flap endonuclease activity"/>
    <property type="evidence" value="ECO:0007669"/>
    <property type="project" value="UniProtKB-UniRule"/>
</dbReference>
<dbReference type="GO" id="GO:0003677">
    <property type="term" value="F:DNA binding"/>
    <property type="evidence" value="ECO:0007669"/>
    <property type="project" value="UniProtKB-UniRule"/>
</dbReference>
<dbReference type="GO" id="GO:0000287">
    <property type="term" value="F:magnesium ion binding"/>
    <property type="evidence" value="ECO:0007669"/>
    <property type="project" value="UniProtKB-UniRule"/>
</dbReference>
<dbReference type="GO" id="GO:0030145">
    <property type="term" value="F:manganese ion binding"/>
    <property type="evidence" value="ECO:0007669"/>
    <property type="project" value="TreeGrafter"/>
</dbReference>
<dbReference type="GO" id="GO:0004523">
    <property type="term" value="F:RNA-DNA hybrid ribonuclease activity"/>
    <property type="evidence" value="ECO:0007669"/>
    <property type="project" value="TreeGrafter"/>
</dbReference>
<dbReference type="GO" id="GO:0006284">
    <property type="term" value="P:base-excision repair"/>
    <property type="evidence" value="ECO:0007669"/>
    <property type="project" value="UniProtKB-UniRule"/>
</dbReference>
<dbReference type="GO" id="GO:0043137">
    <property type="term" value="P:DNA replication, removal of RNA primer"/>
    <property type="evidence" value="ECO:0007669"/>
    <property type="project" value="UniProtKB-UniRule"/>
</dbReference>
<dbReference type="CDD" id="cd09907">
    <property type="entry name" value="H3TH_FEN1-Euk"/>
    <property type="match status" value="1"/>
</dbReference>
<dbReference type="CDD" id="cd09867">
    <property type="entry name" value="PIN_FEN1"/>
    <property type="match status" value="1"/>
</dbReference>
<dbReference type="FunFam" id="1.10.150.20:FF:000009">
    <property type="entry name" value="Flap endonuclease 1"/>
    <property type="match status" value="1"/>
</dbReference>
<dbReference type="FunFam" id="3.40.50.1010:FF:000003">
    <property type="entry name" value="Flap endonuclease 1"/>
    <property type="match status" value="1"/>
</dbReference>
<dbReference type="Gene3D" id="1.10.150.20">
    <property type="entry name" value="5' to 3' exonuclease, C-terminal subdomain"/>
    <property type="match status" value="1"/>
</dbReference>
<dbReference type="Gene3D" id="3.40.50.1010">
    <property type="entry name" value="5'-nuclease"/>
    <property type="match status" value="1"/>
</dbReference>
<dbReference type="HAMAP" id="MF_00614">
    <property type="entry name" value="Fen"/>
    <property type="match status" value="1"/>
</dbReference>
<dbReference type="InterPro" id="IPR002421">
    <property type="entry name" value="5-3_exonuclease"/>
</dbReference>
<dbReference type="InterPro" id="IPR036279">
    <property type="entry name" value="5-3_exonuclease_C_sf"/>
</dbReference>
<dbReference type="InterPro" id="IPR023426">
    <property type="entry name" value="Flap_endonuc"/>
</dbReference>
<dbReference type="InterPro" id="IPR008918">
    <property type="entry name" value="HhH2"/>
</dbReference>
<dbReference type="InterPro" id="IPR029060">
    <property type="entry name" value="PIN-like_dom_sf"/>
</dbReference>
<dbReference type="InterPro" id="IPR006086">
    <property type="entry name" value="XPG-I_dom"/>
</dbReference>
<dbReference type="InterPro" id="IPR006084">
    <property type="entry name" value="XPG/Rad2"/>
</dbReference>
<dbReference type="InterPro" id="IPR019974">
    <property type="entry name" value="XPG_CS"/>
</dbReference>
<dbReference type="InterPro" id="IPR006085">
    <property type="entry name" value="XPG_DNA_repair_N"/>
</dbReference>
<dbReference type="PANTHER" id="PTHR11081:SF9">
    <property type="entry name" value="FLAP ENDONUCLEASE 1"/>
    <property type="match status" value="1"/>
</dbReference>
<dbReference type="PANTHER" id="PTHR11081">
    <property type="entry name" value="FLAP ENDONUCLEASE FAMILY MEMBER"/>
    <property type="match status" value="1"/>
</dbReference>
<dbReference type="Pfam" id="PF00867">
    <property type="entry name" value="XPG_I"/>
    <property type="match status" value="1"/>
</dbReference>
<dbReference type="Pfam" id="PF00752">
    <property type="entry name" value="XPG_N"/>
    <property type="match status" value="1"/>
</dbReference>
<dbReference type="PRINTS" id="PR00853">
    <property type="entry name" value="XPGRADSUPER"/>
</dbReference>
<dbReference type="SMART" id="SM00475">
    <property type="entry name" value="53EXOc"/>
    <property type="match status" value="1"/>
</dbReference>
<dbReference type="SMART" id="SM00279">
    <property type="entry name" value="HhH2"/>
    <property type="match status" value="1"/>
</dbReference>
<dbReference type="SMART" id="SM00484">
    <property type="entry name" value="XPGI"/>
    <property type="match status" value="1"/>
</dbReference>
<dbReference type="SMART" id="SM00485">
    <property type="entry name" value="XPGN"/>
    <property type="match status" value="1"/>
</dbReference>
<dbReference type="SUPFAM" id="SSF47807">
    <property type="entry name" value="5' to 3' exonuclease, C-terminal subdomain"/>
    <property type="match status" value="1"/>
</dbReference>
<dbReference type="SUPFAM" id="SSF88723">
    <property type="entry name" value="PIN domain-like"/>
    <property type="match status" value="1"/>
</dbReference>
<dbReference type="PROSITE" id="PS00841">
    <property type="entry name" value="XPG_1"/>
    <property type="match status" value="1"/>
</dbReference>
<dbReference type="PROSITE" id="PS00842">
    <property type="entry name" value="XPG_2"/>
    <property type="match status" value="1"/>
</dbReference>
<keyword id="KW-0227">DNA damage</keyword>
<keyword id="KW-0234">DNA repair</keyword>
<keyword id="KW-0235">DNA replication</keyword>
<keyword id="KW-0255">Endonuclease</keyword>
<keyword id="KW-0269">Exonuclease</keyword>
<keyword id="KW-0378">Hydrolase</keyword>
<keyword id="KW-0460">Magnesium</keyword>
<keyword id="KW-0479">Metal-binding</keyword>
<keyword id="KW-0496">Mitochondrion</keyword>
<keyword id="KW-0540">Nuclease</keyword>
<keyword id="KW-0539">Nucleus</keyword>
<keyword id="KW-0597">Phosphoprotein</keyword>
<comment type="function">
    <text evidence="1">Structure-specific nuclease with 5'-flap endonuclease and 5'-3' exonuclease activities involved in DNA replication and repair. During DNA replication, cleaves the 5'-overhanging flap structure that is generated by displacement synthesis when DNA polymerase encounters the 5'-end of a downstream Okazaki fragment. It enters the flap from the 5'-end and then tracks to cleave the flap base, leaving a nick for ligation. Also involved in the long patch base excision repair (LP-BER) pathway, by cleaving within the apurinic/apyrimidinic (AP) site-terminated flap. Acts as a genome stabilization factor that prevents flaps from equilibrating into structures that lead to duplications and deletions. Also possesses 5'-3' exonuclease activity on nicked or gapped double-stranded DNA, and exhibits RNase H activity. Also involved in replication and repair of rDNA and in repairing mitochondrial DNA.</text>
</comment>
<comment type="cofactor">
    <cofactor evidence="1">
        <name>Mg(2+)</name>
        <dbReference type="ChEBI" id="CHEBI:18420"/>
    </cofactor>
    <text evidence="1">Binds 2 magnesium ions per subunit. They probably participate in the reaction catalyzed by the enzyme. May bind an additional third magnesium ion after substrate binding.</text>
</comment>
<comment type="subunit">
    <text evidence="1">Interacts with PCNA. Three molecules of FEN1 bind to one PCNA trimer with each molecule binding to one PCNA monomer. PCNA stimulates the nuclease activity without altering cleavage specificity.</text>
</comment>
<comment type="subcellular location">
    <subcellularLocation>
        <location evidence="1">Nucleus</location>
        <location evidence="1">Nucleolus</location>
    </subcellularLocation>
    <subcellularLocation>
        <location evidence="1">Nucleus</location>
        <location evidence="1">Nucleoplasm</location>
    </subcellularLocation>
    <subcellularLocation>
        <location evidence="1">Mitochondrion</location>
    </subcellularLocation>
    <text evidence="1">Resides mostly in the nucleoli and relocalizes to the nucleoplasm upon DNA damage.</text>
</comment>
<comment type="PTM">
    <text evidence="1">Phosphorylated. Phosphorylation upon DNA damage induces relocalization to the nuclear plasma.</text>
</comment>
<comment type="similarity">
    <text evidence="1">Belongs to the XPG/RAD2 endonuclease family. FEN1 subfamily.</text>
</comment>
<name>FEN1_GLOMM</name>
<gene>
    <name evidence="1" type="primary">Fen1</name>
</gene>
<organism>
    <name type="scientific">Glossina morsitans morsitans</name>
    <name type="common">Savannah tsetse fly</name>
    <dbReference type="NCBI Taxonomy" id="37546"/>
    <lineage>
        <taxon>Eukaryota</taxon>
        <taxon>Metazoa</taxon>
        <taxon>Ecdysozoa</taxon>
        <taxon>Arthropoda</taxon>
        <taxon>Hexapoda</taxon>
        <taxon>Insecta</taxon>
        <taxon>Pterygota</taxon>
        <taxon>Neoptera</taxon>
        <taxon>Endopterygota</taxon>
        <taxon>Diptera</taxon>
        <taxon>Brachycera</taxon>
        <taxon>Muscomorpha</taxon>
        <taxon>Hippoboscoidea</taxon>
        <taxon>Glossinidae</taxon>
        <taxon>Glossina</taxon>
    </lineage>
</organism>
<evidence type="ECO:0000255" key="1">
    <source>
        <dbReference type="HAMAP-Rule" id="MF_03140"/>
    </source>
</evidence>
<evidence type="ECO:0000256" key="2">
    <source>
        <dbReference type="SAM" id="MobiDB-lite"/>
    </source>
</evidence>